<keyword id="KW-0028">Amino-acid biosynthesis</keyword>
<keyword id="KW-0057">Aromatic amino acid biosynthesis</keyword>
<keyword id="KW-0067">ATP-binding</keyword>
<keyword id="KW-0963">Cytoplasm</keyword>
<keyword id="KW-0418">Kinase</keyword>
<keyword id="KW-0456">Lyase</keyword>
<keyword id="KW-0479">Metal-binding</keyword>
<keyword id="KW-0511">Multifunctional enzyme</keyword>
<keyword id="KW-0521">NADP</keyword>
<keyword id="KW-0547">Nucleotide-binding</keyword>
<keyword id="KW-0560">Oxidoreductase</keyword>
<keyword id="KW-1185">Reference proteome</keyword>
<keyword id="KW-0808">Transferase</keyword>
<keyword id="KW-0862">Zinc</keyword>
<organism>
    <name type="scientific">Talaromyces stipitatus (strain ATCC 10500 / CBS 375.48 / QM 6759 / NRRL 1006)</name>
    <name type="common">Penicillium stipitatum</name>
    <dbReference type="NCBI Taxonomy" id="441959"/>
    <lineage>
        <taxon>Eukaryota</taxon>
        <taxon>Fungi</taxon>
        <taxon>Dikarya</taxon>
        <taxon>Ascomycota</taxon>
        <taxon>Pezizomycotina</taxon>
        <taxon>Eurotiomycetes</taxon>
        <taxon>Eurotiomycetidae</taxon>
        <taxon>Eurotiales</taxon>
        <taxon>Trichocomaceae</taxon>
        <taxon>Talaromyces</taxon>
        <taxon>Talaromyces sect. Talaromyces</taxon>
    </lineage>
</organism>
<sequence>MSMKMADPTKISILGRESIVADYSIWGTYIVQDLLTNLSSTTYVLVTDTNLGSIYLEKFSKIFNEAAAALSPPPRLLTKEIPPGENSKSRQGKADIEDWMLQQTCGRDTVIIALGGGVIGDLLGFVASTYMRGIRFVQVPTTLLAMVDSSIGGKTAIDTPLGKNLIGAIWQPQRIYIDIDFIDTLPEREFINGMAEVIKTAAISDEKEFAALERHADAILNAARSKARKGRFDAVRQELKDHIVASARHKAYVVTADEREGGLRNLLNLGHSIGHAIEAILSPQVLHGECVAIGMVKELELARYLGILKPVAVSRMIKCLSKYGLPTSLKDQRVRKHTAGKHCPLDQLMANMALDKKNDGPKKKVVLLSAIGQTYEPKASVVSNEDIRAVLAPSIEVIPGVPKSLNVVCAPPGSKSISNRALVLAALGSGTVRIKNLLHSDDTEVMLNALEHLGAATFAWEEEGEVLVVNGNGGKMQASPTELYLGNAGTASRFLTSVATLSGKGSVDFNILTGNNRMKQRPIGDLVDALTVNGAEIEYLEKAGSLPLKIAASGGFKGGRINLAAKVSSQYVSSLLMCAPYAKEPVVLKLVGGRPISLSYIEMTTAMMRSFGIDVQQSTTEEWTYHIPQGSYTNPAEYVIESDASSATYPLAIAAVTGTTCTVPNIGSASLQGDARFAVDVLRPMGCKVEQTATSTTVTGPADGVLRPLPNVDMEPMTDAFLGASVLAAIAQGEGSNHTTRIYGIANQRVKECNRIEAMRVELAKFGVVCREHPDGLEIDGIDRSTLRHPAGGVFCYDDHRVAFSFSILALVAPMPTLILEKECVGKTWPTYWDALKQKFGVRLEGKELDESVTTHHAPADRSNASVIIIGMRGAGKTTTGRWAAKVLNRKFIDLDVELEQTEGKSIPEIIKERGWQGFRDAELALFKRVLAERPTGHVLACGGGIVEIGEARKILTDYHKNKGNVLLVMRDIKRVMEFLNVDKTRPAYIEDMMSVWLRRKPWYHECSNVQYYSRHSSAPELALAVEDFGRFIQVVSGKIDYLAAIRKKRLSFFVSLTLPDLRDTGDLLRTVASGSDAVELRVDLLKDPSSDSAIPSAEYVAEQISFYRSKVALPIVFTVRTVSQGGKFPDDAHDAALELITLAIRSGCEFIDLEITFPEELLRKVTESKAHAKIIASHHDPQGKLNWANGSWIQYYNKALQYGDIIKLVGVAESLKDNTALKEFKDWAEQAHDVPVIAINMGDKGQLSRMLNGFLTPVSHPALPFKAAPGQLSAAEIRKGLSIMGEIPAKKFAIFGKPILASRSPAMHNTLFEQNGLPHVYTRLETDQTQDVKEFIRSPDFGGASVTIPLKLDIIPLIDEVLNEAEIIGAVNTIIPVEGKDGTTRLIGRNTDWSGIVRCLREAGAHSNEGKSSALVIGGGGTARAAIYALHHMGFSTVYVLGRSPEKIQNMASTFPTGFDIRVLENADDIETIPRVAVGTVPGDQPIEPNMREILCTIFKRSGQDPSADGASSVLLEMAYKPSVTPLMRLASDAGWKTIPGLEALVGQGVYQFEYWTGITPVYEVARNAVLGTNEK</sequence>
<accession>B8M0U4</accession>
<comment type="function">
    <text evidence="1">The AROM polypeptide catalyzes 5 consecutive enzymatic reactions in prechorismate polyaromatic amino acid biosynthesis.</text>
</comment>
<comment type="catalytic activity">
    <reaction evidence="1">
        <text>7-phospho-2-dehydro-3-deoxy-D-arabino-heptonate = 3-dehydroquinate + phosphate</text>
        <dbReference type="Rhea" id="RHEA:21968"/>
        <dbReference type="ChEBI" id="CHEBI:32364"/>
        <dbReference type="ChEBI" id="CHEBI:43474"/>
        <dbReference type="ChEBI" id="CHEBI:58394"/>
        <dbReference type="EC" id="4.2.3.4"/>
    </reaction>
</comment>
<comment type="catalytic activity">
    <reaction evidence="1">
        <text>3-dehydroquinate = 3-dehydroshikimate + H2O</text>
        <dbReference type="Rhea" id="RHEA:21096"/>
        <dbReference type="ChEBI" id="CHEBI:15377"/>
        <dbReference type="ChEBI" id="CHEBI:16630"/>
        <dbReference type="ChEBI" id="CHEBI:32364"/>
        <dbReference type="EC" id="4.2.1.10"/>
    </reaction>
</comment>
<comment type="catalytic activity">
    <reaction evidence="1">
        <text>shikimate + NADP(+) = 3-dehydroshikimate + NADPH + H(+)</text>
        <dbReference type="Rhea" id="RHEA:17737"/>
        <dbReference type="ChEBI" id="CHEBI:15378"/>
        <dbReference type="ChEBI" id="CHEBI:16630"/>
        <dbReference type="ChEBI" id="CHEBI:36208"/>
        <dbReference type="ChEBI" id="CHEBI:57783"/>
        <dbReference type="ChEBI" id="CHEBI:58349"/>
        <dbReference type="EC" id="1.1.1.25"/>
    </reaction>
</comment>
<comment type="catalytic activity">
    <reaction evidence="1">
        <text>shikimate + ATP = 3-phosphoshikimate + ADP + H(+)</text>
        <dbReference type="Rhea" id="RHEA:13121"/>
        <dbReference type="ChEBI" id="CHEBI:15378"/>
        <dbReference type="ChEBI" id="CHEBI:30616"/>
        <dbReference type="ChEBI" id="CHEBI:36208"/>
        <dbReference type="ChEBI" id="CHEBI:145989"/>
        <dbReference type="ChEBI" id="CHEBI:456216"/>
        <dbReference type="EC" id="2.7.1.71"/>
    </reaction>
</comment>
<comment type="catalytic activity">
    <reaction evidence="1">
        <text>3-phosphoshikimate + phosphoenolpyruvate = 5-O-(1-carboxyvinyl)-3-phosphoshikimate + phosphate</text>
        <dbReference type="Rhea" id="RHEA:21256"/>
        <dbReference type="ChEBI" id="CHEBI:43474"/>
        <dbReference type="ChEBI" id="CHEBI:57701"/>
        <dbReference type="ChEBI" id="CHEBI:58702"/>
        <dbReference type="ChEBI" id="CHEBI:145989"/>
        <dbReference type="EC" id="2.5.1.19"/>
    </reaction>
</comment>
<comment type="cofactor">
    <cofactor>
        <name>Zn(2+)</name>
        <dbReference type="ChEBI" id="CHEBI:29105"/>
    </cofactor>
    <text>Binds 2 Zn(2+) ions per subunit.</text>
</comment>
<comment type="pathway">
    <text evidence="1">Metabolic intermediate biosynthesis; chorismate biosynthesis; chorismate from D-erythrose 4-phosphate and phosphoenolpyruvate: step 2/7.</text>
</comment>
<comment type="pathway">
    <text evidence="1">Metabolic intermediate biosynthesis; chorismate biosynthesis; chorismate from D-erythrose 4-phosphate and phosphoenolpyruvate: step 3/7.</text>
</comment>
<comment type="pathway">
    <text evidence="1">Metabolic intermediate biosynthesis; chorismate biosynthesis; chorismate from D-erythrose 4-phosphate and phosphoenolpyruvate: step 4/7.</text>
</comment>
<comment type="pathway">
    <text evidence="1">Metabolic intermediate biosynthesis; chorismate biosynthesis; chorismate from D-erythrose 4-phosphate and phosphoenolpyruvate: step 5/7.</text>
</comment>
<comment type="pathway">
    <text evidence="1">Metabolic intermediate biosynthesis; chorismate biosynthesis; chorismate from D-erythrose 4-phosphate and phosphoenolpyruvate: step 6/7.</text>
</comment>
<comment type="subunit">
    <text evidence="1">Homodimer.</text>
</comment>
<comment type="subcellular location">
    <subcellularLocation>
        <location evidence="1">Cytoplasm</location>
    </subcellularLocation>
</comment>
<comment type="similarity">
    <text evidence="1">In the N-terminal section; belongs to the sugar phosphate cyclases superfamily. Dehydroquinate synthase family.</text>
</comment>
<comment type="similarity">
    <text evidence="1">In the 2nd section; belongs to the EPSP synthase family.</text>
</comment>
<comment type="similarity">
    <text evidence="1">In the 3rd section; belongs to the shikimate kinase family.</text>
</comment>
<comment type="similarity">
    <text evidence="1">In the 4th section; belongs to the type-I 3-dehydroquinase family.</text>
</comment>
<comment type="similarity">
    <text evidence="1">In the C-terminal section; belongs to the shikimate dehydrogenase family.</text>
</comment>
<feature type="chain" id="PRO_0000406742" description="Pentafunctional AROM polypeptide">
    <location>
        <begin position="1"/>
        <end position="1577"/>
    </location>
</feature>
<feature type="region of interest" description="3-dehydroquinate synthase">
    <location>
        <begin position="1"/>
        <end position="384"/>
    </location>
</feature>
<feature type="region of interest" description="EPSP synthase">
    <location>
        <begin position="397"/>
        <end position="842"/>
    </location>
</feature>
<feature type="region of interest" description="Shikimate kinase">
    <location>
        <begin position="864"/>
        <end position="1056"/>
    </location>
</feature>
<feature type="region of interest" description="3-dehydroquinase">
    <location>
        <begin position="1057"/>
        <end position="1277"/>
    </location>
</feature>
<feature type="region of interest" description="Shikimate dehydrogenase">
    <location>
        <begin position="1290"/>
        <end position="1577"/>
    </location>
</feature>
<feature type="active site" description="Proton acceptor; for 3-dehydroquinate synthase activity" evidence="1">
    <location>
        <position position="260"/>
    </location>
</feature>
<feature type="active site" description="Proton acceptor; for 3-dehydroquinate synthase activity" evidence="1">
    <location>
        <position position="275"/>
    </location>
</feature>
<feature type="active site" description="For EPSP synthase activity" evidence="1">
    <location>
        <position position="824"/>
    </location>
</feature>
<feature type="active site" description="Proton acceptor; for 3-dehydroquinate dehydratase activity" evidence="1">
    <location>
        <position position="1180"/>
    </location>
</feature>
<feature type="active site" description="Schiff-base intermediate with substrate; for 3-dehydroquinate dehydratase activity" evidence="1">
    <location>
        <position position="1208"/>
    </location>
</feature>
<feature type="binding site" evidence="1">
    <location>
        <begin position="48"/>
        <end position="50"/>
    </location>
    <ligand>
        <name>NAD(+)</name>
        <dbReference type="ChEBI" id="CHEBI:57540"/>
    </ligand>
</feature>
<feature type="binding site" evidence="1">
    <location>
        <begin position="85"/>
        <end position="88"/>
    </location>
    <ligand>
        <name>NAD(+)</name>
        <dbReference type="ChEBI" id="CHEBI:57540"/>
    </ligand>
</feature>
<feature type="binding site" evidence="1">
    <location>
        <begin position="116"/>
        <end position="118"/>
    </location>
    <ligand>
        <name>NAD(+)</name>
        <dbReference type="ChEBI" id="CHEBI:57540"/>
    </ligand>
</feature>
<feature type="binding site" evidence="1">
    <location>
        <position position="121"/>
    </location>
    <ligand>
        <name>NAD(+)</name>
        <dbReference type="ChEBI" id="CHEBI:57540"/>
    </ligand>
</feature>
<feature type="binding site" evidence="1">
    <location>
        <position position="132"/>
    </location>
    <ligand>
        <name>7-phospho-2-dehydro-3-deoxy-D-arabino-heptonate</name>
        <dbReference type="ChEBI" id="CHEBI:58394"/>
    </ligand>
</feature>
<feature type="binding site" evidence="1">
    <location>
        <begin position="141"/>
        <end position="142"/>
    </location>
    <ligand>
        <name>NAD(+)</name>
        <dbReference type="ChEBI" id="CHEBI:57540"/>
    </ligand>
</feature>
<feature type="binding site" evidence="1">
    <location>
        <position position="148"/>
    </location>
    <ligand>
        <name>7-phospho-2-dehydro-3-deoxy-D-arabino-heptonate</name>
        <dbReference type="ChEBI" id="CHEBI:58394"/>
    </ligand>
</feature>
<feature type="binding site" evidence="1">
    <location>
        <position position="154"/>
    </location>
    <ligand>
        <name>7-phospho-2-dehydro-3-deoxy-D-arabino-heptonate</name>
        <dbReference type="ChEBI" id="CHEBI:58394"/>
    </ligand>
</feature>
<feature type="binding site" evidence="1">
    <location>
        <position position="163"/>
    </location>
    <ligand>
        <name>NAD(+)</name>
        <dbReference type="ChEBI" id="CHEBI:57540"/>
    </ligand>
</feature>
<feature type="binding site" evidence="1">
    <location>
        <position position="164"/>
    </location>
    <ligand>
        <name>7-phospho-2-dehydro-3-deoxy-D-arabino-heptonate</name>
        <dbReference type="ChEBI" id="CHEBI:58394"/>
    </ligand>
</feature>
<feature type="binding site" evidence="1">
    <location>
        <begin position="181"/>
        <end position="184"/>
    </location>
    <ligand>
        <name>NAD(+)</name>
        <dbReference type="ChEBI" id="CHEBI:57540"/>
    </ligand>
</feature>
<feature type="binding site" evidence="1">
    <location>
        <position position="192"/>
    </location>
    <ligand>
        <name>NAD(+)</name>
        <dbReference type="ChEBI" id="CHEBI:57540"/>
    </ligand>
</feature>
<feature type="binding site" evidence="1">
    <location>
        <begin position="196"/>
        <end position="199"/>
    </location>
    <ligand>
        <name>7-phospho-2-dehydro-3-deoxy-D-arabino-heptonate</name>
        <dbReference type="ChEBI" id="CHEBI:58394"/>
    </ligand>
</feature>
<feature type="binding site" evidence="1">
    <location>
        <position position="196"/>
    </location>
    <ligand>
        <name>Zn(2+)</name>
        <dbReference type="ChEBI" id="CHEBI:29105"/>
        <note>catalytic</note>
    </ligand>
</feature>
<feature type="binding site" evidence="1">
    <location>
        <position position="250"/>
    </location>
    <ligand>
        <name>7-phospho-2-dehydro-3-deoxy-D-arabino-heptonate</name>
        <dbReference type="ChEBI" id="CHEBI:58394"/>
    </ligand>
</feature>
<feature type="binding site" evidence="1">
    <location>
        <begin position="264"/>
        <end position="268"/>
    </location>
    <ligand>
        <name>7-phospho-2-dehydro-3-deoxy-D-arabino-heptonate</name>
        <dbReference type="ChEBI" id="CHEBI:58394"/>
    </ligand>
</feature>
<feature type="binding site" evidence="1">
    <location>
        <position position="271"/>
    </location>
    <ligand>
        <name>7-phospho-2-dehydro-3-deoxy-D-arabino-heptonate</name>
        <dbReference type="ChEBI" id="CHEBI:58394"/>
    </ligand>
</feature>
<feature type="binding site" evidence="1">
    <location>
        <position position="271"/>
    </location>
    <ligand>
        <name>Zn(2+)</name>
        <dbReference type="ChEBI" id="CHEBI:29105"/>
        <note>catalytic</note>
    </ligand>
</feature>
<feature type="binding site" evidence="1">
    <location>
        <position position="287"/>
    </location>
    <ligand>
        <name>7-phospho-2-dehydro-3-deoxy-D-arabino-heptonate</name>
        <dbReference type="ChEBI" id="CHEBI:58394"/>
    </ligand>
</feature>
<feature type="binding site" evidence="1">
    <location>
        <position position="287"/>
    </location>
    <ligand>
        <name>Zn(2+)</name>
        <dbReference type="ChEBI" id="CHEBI:29105"/>
        <note>catalytic</note>
    </ligand>
</feature>
<feature type="binding site" evidence="1">
    <location>
        <position position="356"/>
    </location>
    <ligand>
        <name>7-phospho-2-dehydro-3-deoxy-D-arabino-heptonate</name>
        <dbReference type="ChEBI" id="CHEBI:58394"/>
    </ligand>
</feature>
<feature type="binding site" evidence="1">
    <location>
        <begin position="871"/>
        <end position="878"/>
    </location>
    <ligand>
        <name>ATP</name>
        <dbReference type="ChEBI" id="CHEBI:30616"/>
    </ligand>
</feature>
<gene>
    <name evidence="1" type="primary">aroM</name>
    <name type="ORF">TSTA_087100</name>
</gene>
<evidence type="ECO:0000255" key="1">
    <source>
        <dbReference type="HAMAP-Rule" id="MF_03143"/>
    </source>
</evidence>
<proteinExistence type="inferred from homology"/>
<name>ARO1_TALSN</name>
<protein>
    <recommendedName>
        <fullName evidence="1">Pentafunctional AROM polypeptide</fullName>
    </recommendedName>
    <domain>
        <recommendedName>
            <fullName evidence="1">3-dehydroquinate synthase</fullName>
            <shortName evidence="1">DHQS</shortName>
            <ecNumber evidence="1">4.2.3.4</ecNumber>
        </recommendedName>
    </domain>
    <domain>
        <recommendedName>
            <fullName evidence="1">3-phosphoshikimate 1-carboxyvinyltransferase</fullName>
            <ecNumber evidence="1">2.5.1.19</ecNumber>
        </recommendedName>
        <alternativeName>
            <fullName evidence="1">5-enolpyruvylshikimate-3-phosphate synthase</fullName>
            <shortName evidence="1">EPSP synthase</shortName>
            <shortName evidence="1">EPSPS</shortName>
        </alternativeName>
    </domain>
    <domain>
        <recommendedName>
            <fullName evidence="1">Shikimate kinase</fullName>
            <shortName evidence="1">SK</shortName>
            <ecNumber evidence="1">2.7.1.71</ecNumber>
        </recommendedName>
    </domain>
    <domain>
        <recommendedName>
            <fullName evidence="1">3-dehydroquinate dehydratase</fullName>
            <shortName evidence="1">3-dehydroquinase</shortName>
            <ecNumber evidence="1">4.2.1.10</ecNumber>
        </recommendedName>
    </domain>
    <domain>
        <recommendedName>
            <fullName evidence="1">Shikimate dehydrogenase</fullName>
            <ecNumber evidence="1">1.1.1.25</ecNumber>
        </recommendedName>
    </domain>
</protein>
<reference key="1">
    <citation type="journal article" date="2015" name="Genome Announc.">
        <title>Genome sequence of the AIDS-associated pathogen Penicillium marneffei (ATCC18224) and its near taxonomic relative Talaromyces stipitatus (ATCC10500).</title>
        <authorList>
            <person name="Nierman W.C."/>
            <person name="Fedorova-Abrams N.D."/>
            <person name="Andrianopoulos A."/>
        </authorList>
    </citation>
    <scope>NUCLEOTIDE SEQUENCE [LARGE SCALE GENOMIC DNA]</scope>
    <source>
        <strain>ATCC 10500 / CBS 375.48 / QM 6759 / NRRL 1006</strain>
    </source>
</reference>
<dbReference type="EC" id="4.2.3.4" evidence="1"/>
<dbReference type="EC" id="2.5.1.19" evidence="1"/>
<dbReference type="EC" id="2.7.1.71" evidence="1"/>
<dbReference type="EC" id="4.2.1.10" evidence="1"/>
<dbReference type="EC" id="1.1.1.25" evidence="1"/>
<dbReference type="EMBL" id="EQ962653">
    <property type="protein sequence ID" value="EED21477.1"/>
    <property type="molecule type" value="Genomic_DNA"/>
</dbReference>
<dbReference type="RefSeq" id="XP_002478440.1">
    <property type="nucleotide sequence ID" value="XM_002478395.1"/>
</dbReference>
<dbReference type="SMR" id="B8M0U4"/>
<dbReference type="FunCoup" id="B8M0U4">
    <property type="interactions" value="499"/>
</dbReference>
<dbReference type="STRING" id="441959.B8M0U4"/>
<dbReference type="GeneID" id="8110116"/>
<dbReference type="VEuPathDB" id="FungiDB:TSTA_087100"/>
<dbReference type="eggNOG" id="KOG0692">
    <property type="taxonomic scope" value="Eukaryota"/>
</dbReference>
<dbReference type="HOGENOM" id="CLU_001201_1_2_1"/>
<dbReference type="InParanoid" id="B8M0U4"/>
<dbReference type="OMA" id="SWANMSW"/>
<dbReference type="OrthoDB" id="197068at2759"/>
<dbReference type="PhylomeDB" id="B8M0U4"/>
<dbReference type="UniPathway" id="UPA00053">
    <property type="reaction ID" value="UER00085"/>
</dbReference>
<dbReference type="UniPathway" id="UPA00053">
    <property type="reaction ID" value="UER00086"/>
</dbReference>
<dbReference type="UniPathway" id="UPA00053">
    <property type="reaction ID" value="UER00087"/>
</dbReference>
<dbReference type="UniPathway" id="UPA00053">
    <property type="reaction ID" value="UER00088"/>
</dbReference>
<dbReference type="UniPathway" id="UPA00053">
    <property type="reaction ID" value="UER00089"/>
</dbReference>
<dbReference type="Proteomes" id="UP000001745">
    <property type="component" value="Unassembled WGS sequence"/>
</dbReference>
<dbReference type="GO" id="GO:0005737">
    <property type="term" value="C:cytoplasm"/>
    <property type="evidence" value="ECO:0007669"/>
    <property type="project" value="UniProtKB-SubCell"/>
</dbReference>
<dbReference type="GO" id="GO:0003855">
    <property type="term" value="F:3-dehydroquinate dehydratase activity"/>
    <property type="evidence" value="ECO:0007669"/>
    <property type="project" value="UniProtKB-UniRule"/>
</dbReference>
<dbReference type="GO" id="GO:0003856">
    <property type="term" value="F:3-dehydroquinate synthase activity"/>
    <property type="evidence" value="ECO:0007669"/>
    <property type="project" value="UniProtKB-UniRule"/>
</dbReference>
<dbReference type="GO" id="GO:0003866">
    <property type="term" value="F:3-phosphoshikimate 1-carboxyvinyltransferase activity"/>
    <property type="evidence" value="ECO:0007669"/>
    <property type="project" value="UniProtKB-UniRule"/>
</dbReference>
<dbReference type="GO" id="GO:0005524">
    <property type="term" value="F:ATP binding"/>
    <property type="evidence" value="ECO:0007669"/>
    <property type="project" value="UniProtKB-UniRule"/>
</dbReference>
<dbReference type="GO" id="GO:0046872">
    <property type="term" value="F:metal ion binding"/>
    <property type="evidence" value="ECO:0007669"/>
    <property type="project" value="UniProtKB-UniRule"/>
</dbReference>
<dbReference type="GO" id="GO:0004764">
    <property type="term" value="F:shikimate 3-dehydrogenase (NADP+) activity"/>
    <property type="evidence" value="ECO:0007669"/>
    <property type="project" value="UniProtKB-UniRule"/>
</dbReference>
<dbReference type="GO" id="GO:0004765">
    <property type="term" value="F:shikimate kinase activity"/>
    <property type="evidence" value="ECO:0007669"/>
    <property type="project" value="UniProtKB-UniRule"/>
</dbReference>
<dbReference type="GO" id="GO:0008652">
    <property type="term" value="P:amino acid biosynthetic process"/>
    <property type="evidence" value="ECO:0007669"/>
    <property type="project" value="UniProtKB-KW"/>
</dbReference>
<dbReference type="GO" id="GO:0009073">
    <property type="term" value="P:aromatic amino acid family biosynthetic process"/>
    <property type="evidence" value="ECO:0007669"/>
    <property type="project" value="UniProtKB-UniRule"/>
</dbReference>
<dbReference type="GO" id="GO:0009423">
    <property type="term" value="P:chorismate biosynthetic process"/>
    <property type="evidence" value="ECO:0007669"/>
    <property type="project" value="UniProtKB-UniRule"/>
</dbReference>
<dbReference type="CDD" id="cd00502">
    <property type="entry name" value="DHQase_I"/>
    <property type="match status" value="1"/>
</dbReference>
<dbReference type="CDD" id="cd08195">
    <property type="entry name" value="DHQS"/>
    <property type="match status" value="1"/>
</dbReference>
<dbReference type="CDD" id="cd01556">
    <property type="entry name" value="EPSP_synthase"/>
    <property type="match status" value="1"/>
</dbReference>
<dbReference type="CDD" id="cd01065">
    <property type="entry name" value="NAD_bind_Shikimate_DH"/>
    <property type="match status" value="1"/>
</dbReference>
<dbReference type="CDD" id="cd00464">
    <property type="entry name" value="SK"/>
    <property type="match status" value="1"/>
</dbReference>
<dbReference type="FunFam" id="1.20.1090.10:FF:000007">
    <property type="entry name" value="Pentafunctional AROM polypeptide"/>
    <property type="match status" value="1"/>
</dbReference>
<dbReference type="FunFam" id="3.20.20.70:FF:000135">
    <property type="entry name" value="Pentafunctional AROM polypeptide"/>
    <property type="match status" value="1"/>
</dbReference>
<dbReference type="FunFam" id="3.40.50.1970:FF:000007">
    <property type="entry name" value="Pentafunctional AROM polypeptide"/>
    <property type="match status" value="1"/>
</dbReference>
<dbReference type="FunFam" id="3.40.50.300:FF:001256">
    <property type="entry name" value="Pentafunctional AROM polypeptide"/>
    <property type="match status" value="1"/>
</dbReference>
<dbReference type="FunFam" id="3.65.10.10:FF:000007">
    <property type="entry name" value="Pentafunctional AROM polypeptide"/>
    <property type="match status" value="1"/>
</dbReference>
<dbReference type="FunFam" id="3.65.10.10:FF:000008">
    <property type="entry name" value="Pentafunctional AROM polypeptide"/>
    <property type="match status" value="1"/>
</dbReference>
<dbReference type="Gene3D" id="3.40.50.1970">
    <property type="match status" value="1"/>
</dbReference>
<dbReference type="Gene3D" id="3.20.20.70">
    <property type="entry name" value="Aldolase class I"/>
    <property type="match status" value="1"/>
</dbReference>
<dbReference type="Gene3D" id="1.20.1090.10">
    <property type="entry name" value="Dehydroquinate synthase-like - alpha domain"/>
    <property type="match status" value="1"/>
</dbReference>
<dbReference type="Gene3D" id="3.65.10.10">
    <property type="entry name" value="Enolpyruvate transferase domain"/>
    <property type="match status" value="2"/>
</dbReference>
<dbReference type="Gene3D" id="3.40.50.10860">
    <property type="entry name" value="Leucine Dehydrogenase, chain A, domain 1"/>
    <property type="match status" value="1"/>
</dbReference>
<dbReference type="Gene3D" id="3.40.50.720">
    <property type="entry name" value="NAD(P)-binding Rossmann-like Domain"/>
    <property type="match status" value="1"/>
</dbReference>
<dbReference type="Gene3D" id="3.40.50.300">
    <property type="entry name" value="P-loop containing nucleotide triphosphate hydrolases"/>
    <property type="match status" value="1"/>
</dbReference>
<dbReference type="HAMAP" id="MF_00210">
    <property type="entry name" value="EPSP_synth"/>
    <property type="match status" value="1"/>
</dbReference>
<dbReference type="HAMAP" id="MF_03143">
    <property type="entry name" value="Pentafunct_AroM"/>
    <property type="match status" value="1"/>
</dbReference>
<dbReference type="HAMAP" id="MF_00109">
    <property type="entry name" value="Shikimate_kinase"/>
    <property type="match status" value="1"/>
</dbReference>
<dbReference type="InterPro" id="IPR018508">
    <property type="entry name" value="3-dehydroquinate_DH_AS"/>
</dbReference>
<dbReference type="InterPro" id="IPR013785">
    <property type="entry name" value="Aldolase_TIM"/>
</dbReference>
<dbReference type="InterPro" id="IPR046346">
    <property type="entry name" value="Aminoacid_DH-like_N_sf"/>
</dbReference>
<dbReference type="InterPro" id="IPR016037">
    <property type="entry name" value="DHQ_synth_AroB"/>
</dbReference>
<dbReference type="InterPro" id="IPR030960">
    <property type="entry name" value="DHQS/DOIS_N"/>
</dbReference>
<dbReference type="InterPro" id="IPR056179">
    <property type="entry name" value="DHQS_C"/>
</dbReference>
<dbReference type="InterPro" id="IPR001381">
    <property type="entry name" value="DHquinase_I"/>
</dbReference>
<dbReference type="InterPro" id="IPR001986">
    <property type="entry name" value="Enolpyruvate_Tfrase_dom"/>
</dbReference>
<dbReference type="InterPro" id="IPR036968">
    <property type="entry name" value="Enolpyruvate_Tfrase_sf"/>
</dbReference>
<dbReference type="InterPro" id="IPR006264">
    <property type="entry name" value="EPSP_synthase"/>
</dbReference>
<dbReference type="InterPro" id="IPR023193">
    <property type="entry name" value="EPSP_synthase_CS"/>
</dbReference>
<dbReference type="InterPro" id="IPR036291">
    <property type="entry name" value="NAD(P)-bd_dom_sf"/>
</dbReference>
<dbReference type="InterPro" id="IPR027417">
    <property type="entry name" value="P-loop_NTPase"/>
</dbReference>
<dbReference type="InterPro" id="IPR008289">
    <property type="entry name" value="Pentafunct_AroM"/>
</dbReference>
<dbReference type="InterPro" id="IPR013792">
    <property type="entry name" value="RNA3'P_cycl/enolpyr_Trfase_a/b"/>
</dbReference>
<dbReference type="InterPro" id="IPR041121">
    <property type="entry name" value="SDH_C"/>
</dbReference>
<dbReference type="InterPro" id="IPR031322">
    <property type="entry name" value="Shikimate/glucono_kinase"/>
</dbReference>
<dbReference type="InterPro" id="IPR013708">
    <property type="entry name" value="Shikimate_DH-bd_N"/>
</dbReference>
<dbReference type="InterPro" id="IPR010110">
    <property type="entry name" value="Shikimate_DH_AroM-type"/>
</dbReference>
<dbReference type="InterPro" id="IPR000623">
    <property type="entry name" value="Shikimate_kinase/TSH1"/>
</dbReference>
<dbReference type="InterPro" id="IPR023000">
    <property type="entry name" value="Shikimate_kinase_CS"/>
</dbReference>
<dbReference type="NCBIfam" id="TIGR01356">
    <property type="entry name" value="aroA"/>
    <property type="match status" value="1"/>
</dbReference>
<dbReference type="NCBIfam" id="TIGR01357">
    <property type="entry name" value="aroB"/>
    <property type="match status" value="1"/>
</dbReference>
<dbReference type="NCBIfam" id="TIGR01093">
    <property type="entry name" value="aroD"/>
    <property type="match status" value="1"/>
</dbReference>
<dbReference type="NCBIfam" id="TIGR01809">
    <property type="entry name" value="Shik-DH-AROM"/>
    <property type="match status" value="1"/>
</dbReference>
<dbReference type="PANTHER" id="PTHR21090">
    <property type="entry name" value="AROM/DEHYDROQUINATE SYNTHASE"/>
    <property type="match status" value="1"/>
</dbReference>
<dbReference type="PANTHER" id="PTHR21090:SF5">
    <property type="entry name" value="PENTAFUNCTIONAL AROM POLYPEPTIDE"/>
    <property type="match status" value="1"/>
</dbReference>
<dbReference type="Pfam" id="PF01761">
    <property type="entry name" value="DHQ_synthase"/>
    <property type="match status" value="1"/>
</dbReference>
<dbReference type="Pfam" id="PF24621">
    <property type="entry name" value="DHQS_C"/>
    <property type="match status" value="1"/>
</dbReference>
<dbReference type="Pfam" id="PF01487">
    <property type="entry name" value="DHquinase_I"/>
    <property type="match status" value="1"/>
</dbReference>
<dbReference type="Pfam" id="PF00275">
    <property type="entry name" value="EPSP_synthase"/>
    <property type="match status" value="1"/>
</dbReference>
<dbReference type="Pfam" id="PF18317">
    <property type="entry name" value="SDH_C"/>
    <property type="match status" value="1"/>
</dbReference>
<dbReference type="Pfam" id="PF08501">
    <property type="entry name" value="Shikimate_dh_N"/>
    <property type="match status" value="1"/>
</dbReference>
<dbReference type="Pfam" id="PF01202">
    <property type="entry name" value="SKI"/>
    <property type="match status" value="1"/>
</dbReference>
<dbReference type="PIRSF" id="PIRSF000514">
    <property type="entry name" value="Pentafunct_AroM"/>
    <property type="match status" value="1"/>
</dbReference>
<dbReference type="PRINTS" id="PR01100">
    <property type="entry name" value="SHIKIMTKNASE"/>
</dbReference>
<dbReference type="SUPFAM" id="SSF51569">
    <property type="entry name" value="Aldolase"/>
    <property type="match status" value="1"/>
</dbReference>
<dbReference type="SUPFAM" id="SSF53223">
    <property type="entry name" value="Aminoacid dehydrogenase-like, N-terminal domain"/>
    <property type="match status" value="1"/>
</dbReference>
<dbReference type="SUPFAM" id="SSF56796">
    <property type="entry name" value="Dehydroquinate synthase-like"/>
    <property type="match status" value="1"/>
</dbReference>
<dbReference type="SUPFAM" id="SSF55205">
    <property type="entry name" value="EPT/RTPC-like"/>
    <property type="match status" value="1"/>
</dbReference>
<dbReference type="SUPFAM" id="SSF51735">
    <property type="entry name" value="NAD(P)-binding Rossmann-fold domains"/>
    <property type="match status" value="1"/>
</dbReference>
<dbReference type="SUPFAM" id="SSF52540">
    <property type="entry name" value="P-loop containing nucleoside triphosphate hydrolases"/>
    <property type="match status" value="1"/>
</dbReference>
<dbReference type="PROSITE" id="PS01028">
    <property type="entry name" value="DEHYDROQUINASE_I"/>
    <property type="match status" value="1"/>
</dbReference>
<dbReference type="PROSITE" id="PS00104">
    <property type="entry name" value="EPSP_SYNTHASE_1"/>
    <property type="match status" value="1"/>
</dbReference>
<dbReference type="PROSITE" id="PS00885">
    <property type="entry name" value="EPSP_SYNTHASE_2"/>
    <property type="match status" value="1"/>
</dbReference>
<dbReference type="PROSITE" id="PS01128">
    <property type="entry name" value="SHIKIMATE_KINASE"/>
    <property type="match status" value="1"/>
</dbReference>